<sequence>MLLPSDVARLVLGYLQQENLTSTCQTFILESSNLKEYAEHCTDEGFIPACLLSLFGKNLTTILNEYVAMKAKETSNDVPTIMSSLWKKLDHTLSQIRSMHSSPGFAAHQRARTRNGIAEIKRQRWLASQAAPVSSELLVLPYASGQFTTSPLVATQAVKPTGPISTPVRSNIVVVNQSQPQSTVTNTAGESLNIIPGPQERKTQTSLMSPGRRKSESQKKSLTSSGPHSSRNFQDPNAFAVEKQMVIENAREKILSNKSLQEKLAENINKFLTSDSSVAQVPKQTDSNPTEPETSIDELLGLPSEIHMSEEAIQDILEQTESDPAFQALFDLFDYGKTKNNKNMPQISSQPMETNSNIVLPEETNLTIKSSFETEESDGQSGQPPFCTSYQNEDVLLNDLKSGNSHDVLPQESQENFSQISSNIQKKTFKTAIPAEQKCALDITLESVSNLSDFNQRGSSAECNEHCSELFASQIPTEAEVAVGEKNSLSADILSQSQYQPDQPSVPVTSFVSLGGETNDKNLVLSGKNSQLLSQSTPLTTKPSKSQLCENSNNIIKVKTNPQASESADSSETANRKTETNTVSPAAAQPQADCQDNSPLQSKPPPGIGESLGVNVTEKIEIHLEEPAPSDKQLSNDAASVDLNPTESKTEPLQSASAQEPEPPSVKDGDTIFLSLSEHNSCEEVALVLGEGNPVKNNNSLSSESGGSVGVSPETQNTDGKTSNSTEVDASSIVSLKIIISDDPFVSSDAELNSAVSSISGENLPTIILSSKSPAKNAEFVTCLSSEETASAVVSVEVGDSGSMEQNLLVLKPEEPMVNNTQNEDGIAFSANVAPCVPKDGGYIQLMPTTSTAFGNSSNILIATCMTDSTALGPTVSQSNVVVLPGSSAPMTAQPPQQQLQTPPKSNSAFAVSQAVSPNFSQGSAIIIASPVQPVLQGMVGMIPVSVVGQNGNTFSTPPQQVLHMPLAAPVCNRSIAQLPIPQKSQKAQGLRNKLITGKQVNNLTNLSSLSEACHTQRTEASDKNIATELGKKMEDTTISLSGERVAPPSKPFESHRRVLCFDSTVSSVANTQGSLYKMTSENKEKKEASFSHLDSPILSSTLKPPPNNAIKREREKTVPKILSKSETASSRHTTVKEVQSEKKVSPTEVALESLHKATANKENELCGDGERPKNADTSKLPGGQQNGSLRNEKAIASLQELTKKQATPSNNKNATSVGGTVKDQKQEQSKPASSLIGAEILQDVPIHSPANRSADTDLPVPRTPGSGAGEKHKEEPSDSMKAPASRRCGEEGSMPRVMIPPVTADLPACSPASETGSENSVSMAAHTLMILSRAAIARTTATPLKDNTQQFRTSSRSTTKKRKIEELDECERNSRTSGKNLANSSVPMKKKKIKKKKLPSSFPAGMDVDKFLLSLHYDE</sequence>
<name>NPAT_MOUSE</name>
<feature type="chain" id="PRO_0000318164" description="Protein NPAT">
    <location>
        <begin position="1"/>
        <end position="1420"/>
    </location>
</feature>
<feature type="domain" description="LisH" evidence="3">
    <location>
        <begin position="3"/>
        <end position="35"/>
    </location>
</feature>
<feature type="region of interest" description="Interaction with MIZF" evidence="1">
    <location>
        <begin position="1"/>
        <end position="319"/>
    </location>
</feature>
<feature type="region of interest" description="Required for activation of histone gene transcription and interaction with MIZF" evidence="1">
    <location>
        <begin position="5"/>
        <end position="25"/>
    </location>
</feature>
<feature type="region of interest" description="Required for activation of histone gene transcription and interaction with MIZF" evidence="1">
    <location>
        <begin position="121"/>
        <end position="145"/>
    </location>
</feature>
<feature type="region of interest" description="Disordered" evidence="4">
    <location>
        <begin position="179"/>
        <end position="236"/>
    </location>
</feature>
<feature type="region of interest" description="Mediates transcriptional activation" evidence="1">
    <location>
        <begin position="263"/>
        <end position="339"/>
    </location>
</feature>
<feature type="region of interest" description="Disordered" evidence="4">
    <location>
        <begin position="534"/>
        <end position="612"/>
    </location>
</feature>
<feature type="region of interest" description="Disordered" evidence="4">
    <location>
        <begin position="625"/>
        <end position="670"/>
    </location>
</feature>
<feature type="region of interest" description="Required for acceleration of G1 phase" evidence="1">
    <location>
        <begin position="628"/>
        <end position="652"/>
    </location>
</feature>
<feature type="region of interest" description="Disordered" evidence="4">
    <location>
        <begin position="696"/>
        <end position="727"/>
    </location>
</feature>
<feature type="region of interest" description="Required for acceleration of G1 phase" evidence="1">
    <location>
        <begin position="822"/>
        <end position="847"/>
    </location>
</feature>
<feature type="region of interest" description="Required for acceleration of G1 phase" evidence="1">
    <location>
        <begin position="1033"/>
        <end position="1048"/>
    </location>
</feature>
<feature type="region of interest" description="Disordered" evidence="4">
    <location>
        <begin position="1089"/>
        <end position="1190"/>
    </location>
</feature>
<feature type="region of interest" description="Disordered" evidence="4">
    <location>
        <begin position="1202"/>
        <end position="1234"/>
    </location>
</feature>
<feature type="region of interest" description="Required for acceleration of G1 phase" evidence="1">
    <location>
        <begin position="1223"/>
        <end position="1247"/>
    </location>
</feature>
<feature type="region of interest" description="Disordered" evidence="4">
    <location>
        <begin position="1249"/>
        <end position="1297"/>
    </location>
</feature>
<feature type="region of interest" description="Required for acceleration of G1 phase" evidence="1">
    <location>
        <begin position="1319"/>
        <end position="1342"/>
    </location>
</feature>
<feature type="region of interest" description="Disordered" evidence="4">
    <location>
        <begin position="1348"/>
        <end position="1400"/>
    </location>
</feature>
<feature type="compositionally biased region" description="Polar residues" evidence="4">
    <location>
        <begin position="179"/>
        <end position="190"/>
    </location>
</feature>
<feature type="compositionally biased region" description="Polar residues" evidence="4">
    <location>
        <begin position="220"/>
        <end position="235"/>
    </location>
</feature>
<feature type="compositionally biased region" description="Polar residues" evidence="4">
    <location>
        <begin position="534"/>
        <end position="573"/>
    </location>
</feature>
<feature type="compositionally biased region" description="Polar residues" evidence="4">
    <location>
        <begin position="632"/>
        <end position="658"/>
    </location>
</feature>
<feature type="compositionally biased region" description="Low complexity" evidence="4">
    <location>
        <begin position="697"/>
        <end position="712"/>
    </location>
</feature>
<feature type="compositionally biased region" description="Polar residues" evidence="4">
    <location>
        <begin position="713"/>
        <end position="727"/>
    </location>
</feature>
<feature type="compositionally biased region" description="Basic and acidic residues" evidence="4">
    <location>
        <begin position="1135"/>
        <end position="1146"/>
    </location>
</feature>
<feature type="compositionally biased region" description="Basic and acidic residues" evidence="4">
    <location>
        <begin position="1154"/>
        <end position="1177"/>
    </location>
</feature>
<feature type="compositionally biased region" description="Polar residues" evidence="4">
    <location>
        <begin position="1205"/>
        <end position="1219"/>
    </location>
</feature>
<feature type="compositionally biased region" description="Basic and acidic residues" evidence="4">
    <location>
        <begin position="1270"/>
        <end position="1279"/>
    </location>
</feature>
<feature type="compositionally biased region" description="Polar residues" evidence="4">
    <location>
        <begin position="1376"/>
        <end position="1387"/>
    </location>
</feature>
<feature type="compositionally biased region" description="Basic residues" evidence="4">
    <location>
        <begin position="1389"/>
        <end position="1399"/>
    </location>
</feature>
<feature type="modified residue" description="Phosphoserine" evidence="2">
    <location>
        <position position="209"/>
    </location>
</feature>
<feature type="modified residue" description="Phosphoserine" evidence="2">
    <location>
        <position position="552"/>
    </location>
</feature>
<feature type="modified residue" description="Phosphoserine" evidence="9">
    <location>
        <position position="598"/>
    </location>
</feature>
<feature type="modified residue" description="Phosphoserine; by CDK2" evidence="2">
    <location>
        <position position="771"/>
    </location>
</feature>
<feature type="modified residue" description="Phosphoserine; by CDK2" evidence="2">
    <location>
        <position position="773"/>
    </location>
</feature>
<feature type="modified residue" description="Phosphoserine; by CDK2" evidence="2">
    <location>
        <position position="1096"/>
    </location>
</feature>
<feature type="modified residue" description="Phosphoserine" evidence="2">
    <location>
        <position position="1146"/>
    </location>
</feature>
<feature type="modified residue" description="N6-acetyllysine" evidence="2">
    <location>
        <position position="1223"/>
    </location>
</feature>
<feature type="modified residue" description="Phosphoserine" evidence="9">
    <location>
        <position position="1249"/>
    </location>
</feature>
<feature type="modified residue" description="Phosphothreonine; by CDK2" evidence="2">
    <location>
        <position position="1264"/>
    </location>
</feature>
<feature type="modified residue" description="Phosphothreonine; by CDK2" evidence="2">
    <location>
        <position position="1343"/>
    </location>
</feature>
<feature type="cross-link" description="Glycyl lysine isopeptide (Lys-Gly) (interchain with G-Cter in SUMO2)" evidence="2">
    <location>
        <position position="1112"/>
    </location>
</feature>
<feature type="cross-link" description="Glycyl lysine isopeptide (Lys-Gly) (interchain with G-Cter in SUMO2)" evidence="2">
    <location>
        <position position="1144"/>
    </location>
</feature>
<feature type="cross-link" description="Glycyl lysine isopeptide (Lys-Gly) (interchain with G-Cter in SUMO2)" evidence="2">
    <location>
        <position position="1274"/>
    </location>
</feature>
<feature type="sequence conflict" description="In Ref. 1; BAC35255." evidence="8" ref="1">
    <original>S</original>
    <variation>P</variation>
    <location>
        <position position="1141"/>
    </location>
</feature>
<keyword id="KW-0007">Acetylation</keyword>
<keyword id="KW-0010">Activator</keyword>
<keyword id="KW-0131">Cell cycle</keyword>
<keyword id="KW-1017">Isopeptide bond</keyword>
<keyword id="KW-0539">Nucleus</keyword>
<keyword id="KW-0597">Phosphoprotein</keyword>
<keyword id="KW-1185">Reference proteome</keyword>
<keyword id="KW-0804">Transcription</keyword>
<keyword id="KW-0805">Transcription regulation</keyword>
<keyword id="KW-0832">Ubl conjugation</keyword>
<comment type="function">
    <text evidence="1 7">Required for progression through the G1 and S phases of the cell cycle and for S phase entry. Activates transcription of the histone H2A, histone H2B, histone H3 and histone H4 genes in conjunction with MIZF. Also positively regulates the ATM, MIZF and PRKDC promoters. Transcriptional activation may be accomplished at least in part by the recruitment of the NuA4 histone acetyltransferase (HAT) complex to target gene promoters (By similarity). Required for early embryonic development.</text>
</comment>
<comment type="subunit">
    <text evidence="1">Interacts with the cylin/CDK complexes CCNE1/CDK2 and CCNA1/CDK2. Interacts with BZW1, CASP8AP2, CREBBP, MIZF and YY1. Interacts with the RUVBL1, RUVBL2 and TRRAP subunits of the NuA4 complex. May also interact with GAPDH, NME1, NME2 and STIP1 (By similarity).</text>
</comment>
<comment type="subcellular location">
    <subcellularLocation>
        <location evidence="6">Nucleus</location>
    </subcellularLocation>
    <text evidence="1">Concentrates in Cajal bodies tethered to histone gene clusters.</text>
</comment>
<comment type="developmental stage">
    <text evidence="5">Expression peaks at the G1/S phase boundary.</text>
</comment>
<comment type="domain">
    <text evidence="1">The LisH domain is required for the activation of histone gene transcription.</text>
</comment>
<comment type="PTM">
    <text evidence="1">Phosphorylated at Ser-771, Ser-773, Ser-1096, Thr-1264 and Thr-1343 by CCNE1/CDK2 at G1-S transition and until prophase, which promotes association with histone gene clusters and stimulates activation of histone transcription. Also phosphorylated by CCNA1/CDK2 in vitro (By similarity).</text>
</comment>
<comment type="similarity">
    <text evidence="8">Belongs to the NPAT family.</text>
</comment>
<organism>
    <name type="scientific">Mus musculus</name>
    <name type="common">Mouse</name>
    <dbReference type="NCBI Taxonomy" id="10090"/>
    <lineage>
        <taxon>Eukaryota</taxon>
        <taxon>Metazoa</taxon>
        <taxon>Chordata</taxon>
        <taxon>Craniata</taxon>
        <taxon>Vertebrata</taxon>
        <taxon>Euteleostomi</taxon>
        <taxon>Mammalia</taxon>
        <taxon>Eutheria</taxon>
        <taxon>Euarchontoglires</taxon>
        <taxon>Glires</taxon>
        <taxon>Rodentia</taxon>
        <taxon>Myomorpha</taxon>
        <taxon>Muroidea</taxon>
        <taxon>Muridae</taxon>
        <taxon>Murinae</taxon>
        <taxon>Mus</taxon>
        <taxon>Mus</taxon>
    </lineage>
</organism>
<reference key="1">
    <citation type="journal article" date="2005" name="Science">
        <title>The transcriptional landscape of the mammalian genome.</title>
        <authorList>
            <person name="Carninci P."/>
            <person name="Kasukawa T."/>
            <person name="Katayama S."/>
            <person name="Gough J."/>
            <person name="Frith M.C."/>
            <person name="Maeda N."/>
            <person name="Oyama R."/>
            <person name="Ravasi T."/>
            <person name="Lenhard B."/>
            <person name="Wells C."/>
            <person name="Kodzius R."/>
            <person name="Shimokawa K."/>
            <person name="Bajic V.B."/>
            <person name="Brenner S.E."/>
            <person name="Batalov S."/>
            <person name="Forrest A.R."/>
            <person name="Zavolan M."/>
            <person name="Davis M.J."/>
            <person name="Wilming L.G."/>
            <person name="Aidinis V."/>
            <person name="Allen J.E."/>
            <person name="Ambesi-Impiombato A."/>
            <person name="Apweiler R."/>
            <person name="Aturaliya R.N."/>
            <person name="Bailey T.L."/>
            <person name="Bansal M."/>
            <person name="Baxter L."/>
            <person name="Beisel K.W."/>
            <person name="Bersano T."/>
            <person name="Bono H."/>
            <person name="Chalk A.M."/>
            <person name="Chiu K.P."/>
            <person name="Choudhary V."/>
            <person name="Christoffels A."/>
            <person name="Clutterbuck D.R."/>
            <person name="Crowe M.L."/>
            <person name="Dalla E."/>
            <person name="Dalrymple B.P."/>
            <person name="de Bono B."/>
            <person name="Della Gatta G."/>
            <person name="di Bernardo D."/>
            <person name="Down T."/>
            <person name="Engstrom P."/>
            <person name="Fagiolini M."/>
            <person name="Faulkner G."/>
            <person name="Fletcher C.F."/>
            <person name="Fukushima T."/>
            <person name="Furuno M."/>
            <person name="Futaki S."/>
            <person name="Gariboldi M."/>
            <person name="Georgii-Hemming P."/>
            <person name="Gingeras T.R."/>
            <person name="Gojobori T."/>
            <person name="Green R.E."/>
            <person name="Gustincich S."/>
            <person name="Harbers M."/>
            <person name="Hayashi Y."/>
            <person name="Hensch T.K."/>
            <person name="Hirokawa N."/>
            <person name="Hill D."/>
            <person name="Huminiecki L."/>
            <person name="Iacono M."/>
            <person name="Ikeo K."/>
            <person name="Iwama A."/>
            <person name="Ishikawa T."/>
            <person name="Jakt M."/>
            <person name="Kanapin A."/>
            <person name="Katoh M."/>
            <person name="Kawasawa Y."/>
            <person name="Kelso J."/>
            <person name="Kitamura H."/>
            <person name="Kitano H."/>
            <person name="Kollias G."/>
            <person name="Krishnan S.P."/>
            <person name="Kruger A."/>
            <person name="Kummerfeld S.K."/>
            <person name="Kurochkin I.V."/>
            <person name="Lareau L.F."/>
            <person name="Lazarevic D."/>
            <person name="Lipovich L."/>
            <person name="Liu J."/>
            <person name="Liuni S."/>
            <person name="McWilliam S."/>
            <person name="Madan Babu M."/>
            <person name="Madera M."/>
            <person name="Marchionni L."/>
            <person name="Matsuda H."/>
            <person name="Matsuzawa S."/>
            <person name="Miki H."/>
            <person name="Mignone F."/>
            <person name="Miyake S."/>
            <person name="Morris K."/>
            <person name="Mottagui-Tabar S."/>
            <person name="Mulder N."/>
            <person name="Nakano N."/>
            <person name="Nakauchi H."/>
            <person name="Ng P."/>
            <person name="Nilsson R."/>
            <person name="Nishiguchi S."/>
            <person name="Nishikawa S."/>
            <person name="Nori F."/>
            <person name="Ohara O."/>
            <person name="Okazaki Y."/>
            <person name="Orlando V."/>
            <person name="Pang K.C."/>
            <person name="Pavan W.J."/>
            <person name="Pavesi G."/>
            <person name="Pesole G."/>
            <person name="Petrovsky N."/>
            <person name="Piazza S."/>
            <person name="Reed J."/>
            <person name="Reid J.F."/>
            <person name="Ring B.Z."/>
            <person name="Ringwald M."/>
            <person name="Rost B."/>
            <person name="Ruan Y."/>
            <person name="Salzberg S.L."/>
            <person name="Sandelin A."/>
            <person name="Schneider C."/>
            <person name="Schoenbach C."/>
            <person name="Sekiguchi K."/>
            <person name="Semple C.A."/>
            <person name="Seno S."/>
            <person name="Sessa L."/>
            <person name="Sheng Y."/>
            <person name="Shibata Y."/>
            <person name="Shimada H."/>
            <person name="Shimada K."/>
            <person name="Silva D."/>
            <person name="Sinclair B."/>
            <person name="Sperling S."/>
            <person name="Stupka E."/>
            <person name="Sugiura K."/>
            <person name="Sultana R."/>
            <person name="Takenaka Y."/>
            <person name="Taki K."/>
            <person name="Tammoja K."/>
            <person name="Tan S.L."/>
            <person name="Tang S."/>
            <person name="Taylor M.S."/>
            <person name="Tegner J."/>
            <person name="Teichmann S.A."/>
            <person name="Ueda H.R."/>
            <person name="van Nimwegen E."/>
            <person name="Verardo R."/>
            <person name="Wei C.L."/>
            <person name="Yagi K."/>
            <person name="Yamanishi H."/>
            <person name="Zabarovsky E."/>
            <person name="Zhu S."/>
            <person name="Zimmer A."/>
            <person name="Hide W."/>
            <person name="Bult C."/>
            <person name="Grimmond S.M."/>
            <person name="Teasdale R.D."/>
            <person name="Liu E.T."/>
            <person name="Brusic V."/>
            <person name="Quackenbush J."/>
            <person name="Wahlestedt C."/>
            <person name="Mattick J.S."/>
            <person name="Hume D.A."/>
            <person name="Kai C."/>
            <person name="Sasaki D."/>
            <person name="Tomaru Y."/>
            <person name="Fukuda S."/>
            <person name="Kanamori-Katayama M."/>
            <person name="Suzuki M."/>
            <person name="Aoki J."/>
            <person name="Arakawa T."/>
            <person name="Iida J."/>
            <person name="Imamura K."/>
            <person name="Itoh M."/>
            <person name="Kato T."/>
            <person name="Kawaji H."/>
            <person name="Kawagashira N."/>
            <person name="Kawashima T."/>
            <person name="Kojima M."/>
            <person name="Kondo S."/>
            <person name="Konno H."/>
            <person name="Nakano K."/>
            <person name="Ninomiya N."/>
            <person name="Nishio T."/>
            <person name="Okada M."/>
            <person name="Plessy C."/>
            <person name="Shibata K."/>
            <person name="Shiraki T."/>
            <person name="Suzuki S."/>
            <person name="Tagami M."/>
            <person name="Waki K."/>
            <person name="Watahiki A."/>
            <person name="Okamura-Oho Y."/>
            <person name="Suzuki H."/>
            <person name="Kawai J."/>
            <person name="Hayashizaki Y."/>
        </authorList>
    </citation>
    <scope>NUCLEOTIDE SEQUENCE [LARGE SCALE MRNA]</scope>
    <source>
        <strain>C57BL/6J</strain>
        <tissue>Cerebellum</tissue>
        <tissue>Head</tissue>
        <tissue>Muellerian duct</tissue>
    </source>
</reference>
<reference key="2">
    <citation type="journal article" date="2009" name="PLoS Biol.">
        <title>Lineage-specific biology revealed by a finished genome assembly of the mouse.</title>
        <authorList>
            <person name="Church D.M."/>
            <person name="Goodstadt L."/>
            <person name="Hillier L.W."/>
            <person name="Zody M.C."/>
            <person name="Goldstein S."/>
            <person name="She X."/>
            <person name="Bult C.J."/>
            <person name="Agarwala R."/>
            <person name="Cherry J.L."/>
            <person name="DiCuccio M."/>
            <person name="Hlavina W."/>
            <person name="Kapustin Y."/>
            <person name="Meric P."/>
            <person name="Maglott D."/>
            <person name="Birtle Z."/>
            <person name="Marques A.C."/>
            <person name="Graves T."/>
            <person name="Zhou S."/>
            <person name="Teague B."/>
            <person name="Potamousis K."/>
            <person name="Churas C."/>
            <person name="Place M."/>
            <person name="Herschleb J."/>
            <person name="Runnheim R."/>
            <person name="Forrest D."/>
            <person name="Amos-Landgraf J."/>
            <person name="Schwartz D.C."/>
            <person name="Cheng Z."/>
            <person name="Lindblad-Toh K."/>
            <person name="Eichler E.E."/>
            <person name="Ponting C.P."/>
        </authorList>
    </citation>
    <scope>NUCLEOTIDE SEQUENCE [LARGE SCALE GENOMIC DNA]</scope>
    <source>
        <strain>C57BL/6J</strain>
    </source>
</reference>
<reference key="3">
    <citation type="journal article" date="1997" name="Mol. Cell. Biol.">
        <title>Proviral inactivation of the Npat gene of Mpv 20 mice results in early embryonic arrest.</title>
        <authorList>
            <person name="Di Fruscio M."/>
            <person name="Weiher H."/>
            <person name="Vanderhyden B.C."/>
            <person name="Imai T."/>
            <person name="Shiomi T."/>
            <person name="Hori T."/>
            <person name="Jaenisch R."/>
            <person name="Gray D.A."/>
        </authorList>
    </citation>
    <scope>FUNCTION</scope>
</reference>
<reference key="4">
    <citation type="journal article" date="2003" name="Mol. Cell. Biol.">
        <title>NPAT expression is regulated by E2F and is essential for cell cycle progression.</title>
        <authorList>
            <person name="Gao G."/>
            <person name="Bracken A.P."/>
            <person name="Burkard K."/>
            <person name="Pasini D."/>
            <person name="Classon M."/>
            <person name="Attwooll C."/>
            <person name="Sagara M."/>
            <person name="Imai T."/>
            <person name="Helin K."/>
            <person name="Zhao J."/>
        </authorList>
    </citation>
    <scope>DEVELOPMENTAL STAGE</scope>
</reference>
<reference key="5">
    <citation type="journal article" date="2006" name="Proc. Natl. Acad. Sci. U.S.A.">
        <title>FLASH is required for histone transcription and S-phase progression.</title>
        <authorList>
            <person name="Barcaroli D."/>
            <person name="Bongiorno-Borbone L."/>
            <person name="Terrinoni A."/>
            <person name="Hofmann T.G."/>
            <person name="Rossi M."/>
            <person name="Knight R.A."/>
            <person name="Matera A.G."/>
            <person name="Melino G."/>
            <person name="De Laurenzi V."/>
        </authorList>
    </citation>
    <scope>SUBCELLULAR LOCATION</scope>
</reference>
<reference key="6">
    <citation type="journal article" date="2010" name="Cell">
        <title>A tissue-specific atlas of mouse protein phosphorylation and expression.</title>
        <authorList>
            <person name="Huttlin E.L."/>
            <person name="Jedrychowski M.P."/>
            <person name="Elias J.E."/>
            <person name="Goswami T."/>
            <person name="Rad R."/>
            <person name="Beausoleil S.A."/>
            <person name="Villen J."/>
            <person name="Haas W."/>
            <person name="Sowa M.E."/>
            <person name="Gygi S.P."/>
        </authorList>
    </citation>
    <scope>PHOSPHORYLATION [LARGE SCALE ANALYSIS] AT SER-598 AND SER-1249</scope>
    <scope>IDENTIFICATION BY MASS SPECTROMETRY [LARGE SCALE ANALYSIS]</scope>
    <source>
        <tissue>Kidney</tissue>
        <tissue>Lung</tissue>
        <tissue>Spleen</tissue>
    </source>
</reference>
<evidence type="ECO:0000250" key="1"/>
<evidence type="ECO:0000250" key="2">
    <source>
        <dbReference type="UniProtKB" id="Q14207"/>
    </source>
</evidence>
<evidence type="ECO:0000255" key="3">
    <source>
        <dbReference type="PROSITE-ProRule" id="PRU00126"/>
    </source>
</evidence>
<evidence type="ECO:0000256" key="4">
    <source>
        <dbReference type="SAM" id="MobiDB-lite"/>
    </source>
</evidence>
<evidence type="ECO:0000269" key="5">
    <source>
    </source>
</evidence>
<evidence type="ECO:0000269" key="6">
    <source>
    </source>
</evidence>
<evidence type="ECO:0000269" key="7">
    <source>
    </source>
</evidence>
<evidence type="ECO:0000305" key="8"/>
<evidence type="ECO:0007744" key="9">
    <source>
    </source>
</evidence>
<dbReference type="EMBL" id="AK033012">
    <property type="protein sequence ID" value="BAC28125.1"/>
    <property type="molecule type" value="mRNA"/>
</dbReference>
<dbReference type="EMBL" id="AK042624">
    <property type="protein sequence ID" value="BAC31308.1"/>
    <property type="molecule type" value="mRNA"/>
</dbReference>
<dbReference type="EMBL" id="AK053074">
    <property type="protein sequence ID" value="BAC35255.1"/>
    <property type="molecule type" value="mRNA"/>
</dbReference>
<dbReference type="EMBL" id="AC156640">
    <property type="status" value="NOT_ANNOTATED_CDS"/>
    <property type="molecule type" value="Genomic_DNA"/>
</dbReference>
<dbReference type="CCDS" id="CCDS40637.1"/>
<dbReference type="RefSeq" id="NP_001074621.1">
    <property type="nucleotide sequence ID" value="NM_001081152.2"/>
</dbReference>
<dbReference type="SMR" id="Q8BMA5"/>
<dbReference type="BioGRID" id="232697">
    <property type="interactions" value="3"/>
</dbReference>
<dbReference type="FunCoup" id="Q8BMA5">
    <property type="interactions" value="4755"/>
</dbReference>
<dbReference type="STRING" id="10090.ENSMUSP00000048709"/>
<dbReference type="GlyGen" id="Q8BMA5">
    <property type="glycosylation" value="1 site"/>
</dbReference>
<dbReference type="iPTMnet" id="Q8BMA5"/>
<dbReference type="PhosphoSitePlus" id="Q8BMA5"/>
<dbReference type="jPOST" id="Q8BMA5"/>
<dbReference type="PaxDb" id="10090-ENSMUSP00000048709"/>
<dbReference type="PeptideAtlas" id="Q8BMA5"/>
<dbReference type="ProteomicsDB" id="293946"/>
<dbReference type="Pumba" id="Q8BMA5"/>
<dbReference type="Antibodypedia" id="45544">
    <property type="antibodies" value="43 antibodies from 11 providers"/>
</dbReference>
<dbReference type="Ensembl" id="ENSMUST00000035850.8">
    <property type="protein sequence ID" value="ENSMUSP00000048709.8"/>
    <property type="gene ID" value="ENSMUSG00000033054.8"/>
</dbReference>
<dbReference type="GeneID" id="244879"/>
<dbReference type="KEGG" id="mmu:244879"/>
<dbReference type="UCSC" id="uc009pmf.1">
    <property type="organism name" value="mouse"/>
</dbReference>
<dbReference type="AGR" id="MGI:107605"/>
<dbReference type="CTD" id="4863"/>
<dbReference type="MGI" id="MGI:107605">
    <property type="gene designation" value="Npat"/>
</dbReference>
<dbReference type="VEuPathDB" id="HostDB:ENSMUSG00000033054"/>
<dbReference type="eggNOG" id="ENOG502QYUR">
    <property type="taxonomic scope" value="Eukaryota"/>
</dbReference>
<dbReference type="GeneTree" id="ENSGT00390000012388"/>
<dbReference type="HOGENOM" id="CLU_004845_0_0_1"/>
<dbReference type="InParanoid" id="Q8BMA5"/>
<dbReference type="OMA" id="PMRSNFV"/>
<dbReference type="OrthoDB" id="6287635at2759"/>
<dbReference type="PhylomeDB" id="Q8BMA5"/>
<dbReference type="TreeFam" id="TF332825"/>
<dbReference type="BioGRID-ORCS" id="244879">
    <property type="hits" value="26 hits in 80 CRISPR screens"/>
</dbReference>
<dbReference type="ChiTaRS" id="Npat">
    <property type="organism name" value="mouse"/>
</dbReference>
<dbReference type="PRO" id="PR:Q8BMA5"/>
<dbReference type="Proteomes" id="UP000000589">
    <property type="component" value="Chromosome 9"/>
</dbReference>
<dbReference type="RNAct" id="Q8BMA5">
    <property type="molecule type" value="protein"/>
</dbReference>
<dbReference type="Bgee" id="ENSMUSG00000033054">
    <property type="expression patterns" value="Expressed in manus and 226 other cell types or tissues"/>
</dbReference>
<dbReference type="GO" id="GO:0015030">
    <property type="term" value="C:Cajal body"/>
    <property type="evidence" value="ECO:0000250"/>
    <property type="project" value="UniProtKB"/>
</dbReference>
<dbReference type="GO" id="GO:0005737">
    <property type="term" value="C:cytoplasm"/>
    <property type="evidence" value="ECO:0000250"/>
    <property type="project" value="UniProtKB"/>
</dbReference>
<dbReference type="GO" id="GO:0097504">
    <property type="term" value="C:Gemini of Cajal bodies"/>
    <property type="evidence" value="ECO:0000250"/>
    <property type="project" value="UniProtKB"/>
</dbReference>
<dbReference type="GO" id="GO:0005654">
    <property type="term" value="C:nucleoplasm"/>
    <property type="evidence" value="ECO:0000250"/>
    <property type="project" value="UniProtKB"/>
</dbReference>
<dbReference type="GO" id="GO:0003713">
    <property type="term" value="F:transcription coactivator activity"/>
    <property type="evidence" value="ECO:0000250"/>
    <property type="project" value="UniProtKB"/>
</dbReference>
<dbReference type="GO" id="GO:0003714">
    <property type="term" value="F:transcription corepressor activity"/>
    <property type="evidence" value="ECO:0007669"/>
    <property type="project" value="Ensembl"/>
</dbReference>
<dbReference type="GO" id="GO:0044843">
    <property type="term" value="P:cell cycle G1/S phase transition"/>
    <property type="evidence" value="ECO:0007669"/>
    <property type="project" value="Ensembl"/>
</dbReference>
<dbReference type="GO" id="GO:0001701">
    <property type="term" value="P:in utero embryonic development"/>
    <property type="evidence" value="ECO:0000315"/>
    <property type="project" value="MGI"/>
</dbReference>
<dbReference type="GO" id="GO:0045944">
    <property type="term" value="P:positive regulation of transcription by RNA polymerase II"/>
    <property type="evidence" value="ECO:0007669"/>
    <property type="project" value="Ensembl"/>
</dbReference>
<dbReference type="InterPro" id="IPR006594">
    <property type="entry name" value="LisH"/>
</dbReference>
<dbReference type="InterPro" id="IPR031442">
    <property type="entry name" value="NPAT_C"/>
</dbReference>
<dbReference type="InterPro" id="IPR052850">
    <property type="entry name" value="NPAT_LisH"/>
</dbReference>
<dbReference type="PANTHER" id="PTHR15087">
    <property type="entry name" value="PROTEIN NPAT"/>
    <property type="match status" value="1"/>
</dbReference>
<dbReference type="PANTHER" id="PTHR15087:SF14">
    <property type="entry name" value="PROTEIN NPAT"/>
    <property type="match status" value="1"/>
</dbReference>
<dbReference type="Pfam" id="PF15712">
    <property type="entry name" value="NPAT_C"/>
    <property type="match status" value="1"/>
</dbReference>
<dbReference type="SMART" id="SM00667">
    <property type="entry name" value="LisH"/>
    <property type="match status" value="1"/>
</dbReference>
<dbReference type="PROSITE" id="PS50896">
    <property type="entry name" value="LISH"/>
    <property type="match status" value="1"/>
</dbReference>
<proteinExistence type="evidence at protein level"/>
<accession>Q8BMA5</accession>
<accession>Q8BWA9</accession>
<accession>Q8BY06</accession>
<protein>
    <recommendedName>
        <fullName>Protein NPAT</fullName>
    </recommendedName>
</protein>
<gene>
    <name type="primary">Npat</name>
</gene>